<accession>Q8NYR1</accession>
<evidence type="ECO:0000255" key="1">
    <source>
        <dbReference type="HAMAP-Rule" id="MF_00114"/>
    </source>
</evidence>
<evidence type="ECO:0000305" key="2"/>
<comment type="function">
    <text evidence="1">Catalyzes a reversible aldol reaction between acetaldehyde and D-glyceraldehyde 3-phosphate to generate 2-deoxy-D-ribose 5-phosphate.</text>
</comment>
<comment type="catalytic activity">
    <reaction evidence="1">
        <text>2-deoxy-D-ribose 5-phosphate = D-glyceraldehyde 3-phosphate + acetaldehyde</text>
        <dbReference type="Rhea" id="RHEA:12821"/>
        <dbReference type="ChEBI" id="CHEBI:15343"/>
        <dbReference type="ChEBI" id="CHEBI:59776"/>
        <dbReference type="ChEBI" id="CHEBI:62877"/>
        <dbReference type="EC" id="4.1.2.4"/>
    </reaction>
</comment>
<comment type="pathway">
    <text evidence="1">Carbohydrate degradation; 2-deoxy-D-ribose 1-phosphate degradation; D-glyceraldehyde 3-phosphate and acetaldehyde from 2-deoxy-alpha-D-ribose 1-phosphate: step 2/2.</text>
</comment>
<comment type="subcellular location">
    <subcellularLocation>
        <location evidence="1">Cytoplasm</location>
    </subcellularLocation>
</comment>
<comment type="similarity">
    <text evidence="1 2">Belongs to the DeoC/FbaB aldolase family. DeoC type 1 subfamily.</text>
</comment>
<name>DEOC1_STAAW</name>
<proteinExistence type="inferred from homology"/>
<reference key="1">
    <citation type="journal article" date="2002" name="Lancet">
        <title>Genome and virulence determinants of high virulence community-acquired MRSA.</title>
        <authorList>
            <person name="Baba T."/>
            <person name="Takeuchi F."/>
            <person name="Kuroda M."/>
            <person name="Yuzawa H."/>
            <person name="Aoki K."/>
            <person name="Oguchi A."/>
            <person name="Nagai Y."/>
            <person name="Iwama N."/>
            <person name="Asano K."/>
            <person name="Naimi T."/>
            <person name="Kuroda H."/>
            <person name="Cui L."/>
            <person name="Yamamoto K."/>
            <person name="Hiramatsu K."/>
        </authorList>
    </citation>
    <scope>NUCLEOTIDE SEQUENCE [LARGE SCALE GENOMIC DNA]</scope>
    <source>
        <strain>MW2</strain>
    </source>
</reference>
<sequence length="220" mass="23501">MKFEKYIDHTLLKPESTRTQIDQIIDEAKAYNFKSVCVNPTHVKYAAERLADSEVLVCTVIGFPLGASTTATKAFETEDAIQNGADEIDMVINIGALKDGRFDDVQQDIEAVVKVAKGHTVKVIIETVLLDHDEIVKASELTKAAGADFVKTSTGFAGGGATAEDVKLMKDTVGADVEVKASGGVRNLEDFNKMVEAGATRIGASAGVQIMQGLEADSDY</sequence>
<gene>
    <name evidence="1" type="primary">deoC1</name>
    <name type="synonym">dra</name>
    <name type="ordered locus">MW0112</name>
</gene>
<keyword id="KW-0963">Cytoplasm</keyword>
<keyword id="KW-0456">Lyase</keyword>
<keyword id="KW-0704">Schiff base</keyword>
<feature type="chain" id="PRO_0000057265" description="Deoxyribose-phosphate aldolase 1">
    <location>
        <begin position="1"/>
        <end position="220"/>
    </location>
</feature>
<feature type="active site" description="Proton donor/acceptor" evidence="1">
    <location>
        <position position="89"/>
    </location>
</feature>
<feature type="active site" description="Schiff-base intermediate with acetaldehyde" evidence="1">
    <location>
        <position position="151"/>
    </location>
</feature>
<feature type="active site" description="Proton donor/acceptor" evidence="1">
    <location>
        <position position="180"/>
    </location>
</feature>
<organism>
    <name type="scientific">Staphylococcus aureus (strain MW2)</name>
    <dbReference type="NCBI Taxonomy" id="196620"/>
    <lineage>
        <taxon>Bacteria</taxon>
        <taxon>Bacillati</taxon>
        <taxon>Bacillota</taxon>
        <taxon>Bacilli</taxon>
        <taxon>Bacillales</taxon>
        <taxon>Staphylococcaceae</taxon>
        <taxon>Staphylococcus</taxon>
    </lineage>
</organism>
<protein>
    <recommendedName>
        <fullName evidence="1">Deoxyribose-phosphate aldolase 1</fullName>
        <shortName evidence="1">DERA 1</shortName>
        <ecNumber evidence="1">4.1.2.4</ecNumber>
    </recommendedName>
    <alternativeName>
        <fullName evidence="1">2-deoxy-D-ribose 5-phosphate aldolase 1</fullName>
    </alternativeName>
    <alternativeName>
        <fullName evidence="1">Phosphodeoxyriboaldolase 1</fullName>
        <shortName evidence="1">Deoxyriboaldolase 1</shortName>
    </alternativeName>
</protein>
<dbReference type="EC" id="4.1.2.4" evidence="1"/>
<dbReference type="EMBL" id="BA000033">
    <property type="protein sequence ID" value="BAB93977.1"/>
    <property type="molecule type" value="Genomic_DNA"/>
</dbReference>
<dbReference type="SMR" id="Q8NYR1"/>
<dbReference type="KEGG" id="sam:MW0112"/>
<dbReference type="HOGENOM" id="CLU_053595_0_0_9"/>
<dbReference type="UniPathway" id="UPA00002">
    <property type="reaction ID" value="UER00468"/>
</dbReference>
<dbReference type="GO" id="GO:0005737">
    <property type="term" value="C:cytoplasm"/>
    <property type="evidence" value="ECO:0007669"/>
    <property type="project" value="UniProtKB-SubCell"/>
</dbReference>
<dbReference type="GO" id="GO:0004139">
    <property type="term" value="F:deoxyribose-phosphate aldolase activity"/>
    <property type="evidence" value="ECO:0007669"/>
    <property type="project" value="UniProtKB-UniRule"/>
</dbReference>
<dbReference type="GO" id="GO:0006018">
    <property type="term" value="P:2-deoxyribose 1-phosphate catabolic process"/>
    <property type="evidence" value="ECO:0007669"/>
    <property type="project" value="UniProtKB-UniRule"/>
</dbReference>
<dbReference type="GO" id="GO:0016052">
    <property type="term" value="P:carbohydrate catabolic process"/>
    <property type="evidence" value="ECO:0007669"/>
    <property type="project" value="TreeGrafter"/>
</dbReference>
<dbReference type="GO" id="GO:0009264">
    <property type="term" value="P:deoxyribonucleotide catabolic process"/>
    <property type="evidence" value="ECO:0007669"/>
    <property type="project" value="InterPro"/>
</dbReference>
<dbReference type="CDD" id="cd00959">
    <property type="entry name" value="DeoC"/>
    <property type="match status" value="1"/>
</dbReference>
<dbReference type="FunFam" id="3.20.20.70:FF:000044">
    <property type="entry name" value="Deoxyribose-phosphate aldolase"/>
    <property type="match status" value="1"/>
</dbReference>
<dbReference type="Gene3D" id="3.20.20.70">
    <property type="entry name" value="Aldolase class I"/>
    <property type="match status" value="1"/>
</dbReference>
<dbReference type="HAMAP" id="MF_00114">
    <property type="entry name" value="DeoC_type1"/>
    <property type="match status" value="1"/>
</dbReference>
<dbReference type="InterPro" id="IPR013785">
    <property type="entry name" value="Aldolase_TIM"/>
</dbReference>
<dbReference type="InterPro" id="IPR011343">
    <property type="entry name" value="DeoC"/>
</dbReference>
<dbReference type="InterPro" id="IPR002915">
    <property type="entry name" value="DeoC/FbaB/LacD_aldolase"/>
</dbReference>
<dbReference type="InterPro" id="IPR028581">
    <property type="entry name" value="DeoC_typeI"/>
</dbReference>
<dbReference type="NCBIfam" id="TIGR00126">
    <property type="entry name" value="deoC"/>
    <property type="match status" value="1"/>
</dbReference>
<dbReference type="PANTHER" id="PTHR10889">
    <property type="entry name" value="DEOXYRIBOSE-PHOSPHATE ALDOLASE"/>
    <property type="match status" value="1"/>
</dbReference>
<dbReference type="PANTHER" id="PTHR10889:SF1">
    <property type="entry name" value="DEOXYRIBOSE-PHOSPHATE ALDOLASE"/>
    <property type="match status" value="1"/>
</dbReference>
<dbReference type="Pfam" id="PF01791">
    <property type="entry name" value="DeoC"/>
    <property type="match status" value="1"/>
</dbReference>
<dbReference type="PIRSF" id="PIRSF001357">
    <property type="entry name" value="DeoC"/>
    <property type="match status" value="1"/>
</dbReference>
<dbReference type="SMART" id="SM01133">
    <property type="entry name" value="DeoC"/>
    <property type="match status" value="1"/>
</dbReference>
<dbReference type="SUPFAM" id="SSF51569">
    <property type="entry name" value="Aldolase"/>
    <property type="match status" value="1"/>
</dbReference>